<gene>
    <name evidence="1" type="primary">aroE</name>
    <name type="ordered locus">Amet_1075</name>
</gene>
<dbReference type="EC" id="1.1.1.25" evidence="1"/>
<dbReference type="EMBL" id="CP000724">
    <property type="protein sequence ID" value="ABR47287.1"/>
    <property type="molecule type" value="Genomic_DNA"/>
</dbReference>
<dbReference type="RefSeq" id="WP_012062329.1">
    <property type="nucleotide sequence ID" value="NC_009633.1"/>
</dbReference>
<dbReference type="SMR" id="A6TM69"/>
<dbReference type="STRING" id="293826.Amet_1075"/>
<dbReference type="KEGG" id="amt:Amet_1075"/>
<dbReference type="eggNOG" id="COG0169">
    <property type="taxonomic scope" value="Bacteria"/>
</dbReference>
<dbReference type="HOGENOM" id="CLU_044063_4_1_9"/>
<dbReference type="OrthoDB" id="9792692at2"/>
<dbReference type="UniPathway" id="UPA00053">
    <property type="reaction ID" value="UER00087"/>
</dbReference>
<dbReference type="Proteomes" id="UP000001572">
    <property type="component" value="Chromosome"/>
</dbReference>
<dbReference type="GO" id="GO:0050661">
    <property type="term" value="F:NADP binding"/>
    <property type="evidence" value="ECO:0007669"/>
    <property type="project" value="InterPro"/>
</dbReference>
<dbReference type="GO" id="GO:0004764">
    <property type="term" value="F:shikimate 3-dehydrogenase (NADP+) activity"/>
    <property type="evidence" value="ECO:0007669"/>
    <property type="project" value="UniProtKB-UniRule"/>
</dbReference>
<dbReference type="GO" id="GO:0008652">
    <property type="term" value="P:amino acid biosynthetic process"/>
    <property type="evidence" value="ECO:0007669"/>
    <property type="project" value="UniProtKB-KW"/>
</dbReference>
<dbReference type="GO" id="GO:0009073">
    <property type="term" value="P:aromatic amino acid family biosynthetic process"/>
    <property type="evidence" value="ECO:0007669"/>
    <property type="project" value="UniProtKB-KW"/>
</dbReference>
<dbReference type="GO" id="GO:0009423">
    <property type="term" value="P:chorismate biosynthetic process"/>
    <property type="evidence" value="ECO:0007669"/>
    <property type="project" value="UniProtKB-UniRule"/>
</dbReference>
<dbReference type="GO" id="GO:0019632">
    <property type="term" value="P:shikimate metabolic process"/>
    <property type="evidence" value="ECO:0007669"/>
    <property type="project" value="InterPro"/>
</dbReference>
<dbReference type="CDD" id="cd01065">
    <property type="entry name" value="NAD_bind_Shikimate_DH"/>
    <property type="match status" value="1"/>
</dbReference>
<dbReference type="FunFam" id="3.40.50.10860:FF:000004">
    <property type="entry name" value="Quinate/shikimate dehydrogenase"/>
    <property type="match status" value="1"/>
</dbReference>
<dbReference type="FunFam" id="3.40.50.720:FF:000086">
    <property type="entry name" value="Quinate/shikimate dehydrogenase"/>
    <property type="match status" value="1"/>
</dbReference>
<dbReference type="Gene3D" id="3.40.50.10860">
    <property type="entry name" value="Leucine Dehydrogenase, chain A, domain 1"/>
    <property type="match status" value="1"/>
</dbReference>
<dbReference type="Gene3D" id="3.40.50.720">
    <property type="entry name" value="NAD(P)-binding Rossmann-like Domain"/>
    <property type="match status" value="1"/>
</dbReference>
<dbReference type="HAMAP" id="MF_00222">
    <property type="entry name" value="Shikimate_DH_AroE"/>
    <property type="match status" value="1"/>
</dbReference>
<dbReference type="InterPro" id="IPR046346">
    <property type="entry name" value="Aminoacid_DH-like_N_sf"/>
</dbReference>
<dbReference type="InterPro" id="IPR036291">
    <property type="entry name" value="NAD(P)-bd_dom_sf"/>
</dbReference>
<dbReference type="InterPro" id="IPR041121">
    <property type="entry name" value="SDH_C"/>
</dbReference>
<dbReference type="InterPro" id="IPR011342">
    <property type="entry name" value="Shikimate_DH"/>
</dbReference>
<dbReference type="InterPro" id="IPR013708">
    <property type="entry name" value="Shikimate_DH-bd_N"/>
</dbReference>
<dbReference type="InterPro" id="IPR022893">
    <property type="entry name" value="Shikimate_DH_fam"/>
</dbReference>
<dbReference type="InterPro" id="IPR006151">
    <property type="entry name" value="Shikm_DH/Glu-tRNA_Rdtase"/>
</dbReference>
<dbReference type="NCBIfam" id="TIGR00507">
    <property type="entry name" value="aroE"/>
    <property type="match status" value="1"/>
</dbReference>
<dbReference type="NCBIfam" id="NF001314">
    <property type="entry name" value="PRK00258.2-2"/>
    <property type="match status" value="1"/>
</dbReference>
<dbReference type="NCBIfam" id="NF001319">
    <property type="entry name" value="PRK00258.3-3"/>
    <property type="match status" value="1"/>
</dbReference>
<dbReference type="PANTHER" id="PTHR21089:SF1">
    <property type="entry name" value="BIFUNCTIONAL 3-DEHYDROQUINATE DEHYDRATASE_SHIKIMATE DEHYDROGENASE, CHLOROPLASTIC"/>
    <property type="match status" value="1"/>
</dbReference>
<dbReference type="PANTHER" id="PTHR21089">
    <property type="entry name" value="SHIKIMATE DEHYDROGENASE"/>
    <property type="match status" value="1"/>
</dbReference>
<dbReference type="Pfam" id="PF18317">
    <property type="entry name" value="SDH_C"/>
    <property type="match status" value="1"/>
</dbReference>
<dbReference type="Pfam" id="PF01488">
    <property type="entry name" value="Shikimate_DH"/>
    <property type="match status" value="1"/>
</dbReference>
<dbReference type="Pfam" id="PF08501">
    <property type="entry name" value="Shikimate_dh_N"/>
    <property type="match status" value="1"/>
</dbReference>
<dbReference type="SUPFAM" id="SSF53223">
    <property type="entry name" value="Aminoacid dehydrogenase-like, N-terminal domain"/>
    <property type="match status" value="1"/>
</dbReference>
<dbReference type="SUPFAM" id="SSF51735">
    <property type="entry name" value="NAD(P)-binding Rossmann-fold domains"/>
    <property type="match status" value="1"/>
</dbReference>
<sequence length="286" mass="31163">MEFKISGYTRLVGLLGYPVRHSLSPLMHNMAFQHLGLDYVYLVFEVKEDNLKEAVDAMKTLDVAGFNVTMPNKQKIIPLLDEISEEARLIGSVNTVVNKNGHLKGYNTDGKGYVMGLADEGISPEGKTIVIAGAGGASKSVAIQLALEGAKEITILNRTVEAAEEICNIINKNIPTCKTSATGYEDNELKQQLKEADLFINCTNLGMGSHEEKSIISSTDILHPDLIVSDVVYAPPKTKLLHMAEEVGCKTINGLGMIIGQGALAFKLWTGEDMPIEYIKRIILSK</sequence>
<comment type="function">
    <text evidence="1">Involved in the biosynthesis of the chorismate, which leads to the biosynthesis of aromatic amino acids. Catalyzes the reversible NADPH linked reduction of 3-dehydroshikimate (DHSA) to yield shikimate (SA).</text>
</comment>
<comment type="catalytic activity">
    <reaction evidence="1">
        <text>shikimate + NADP(+) = 3-dehydroshikimate + NADPH + H(+)</text>
        <dbReference type="Rhea" id="RHEA:17737"/>
        <dbReference type="ChEBI" id="CHEBI:15378"/>
        <dbReference type="ChEBI" id="CHEBI:16630"/>
        <dbReference type="ChEBI" id="CHEBI:36208"/>
        <dbReference type="ChEBI" id="CHEBI:57783"/>
        <dbReference type="ChEBI" id="CHEBI:58349"/>
        <dbReference type="EC" id="1.1.1.25"/>
    </reaction>
</comment>
<comment type="pathway">
    <text evidence="1">Metabolic intermediate biosynthesis; chorismate biosynthesis; chorismate from D-erythrose 4-phosphate and phosphoenolpyruvate: step 4/7.</text>
</comment>
<comment type="subunit">
    <text evidence="1">Homodimer.</text>
</comment>
<comment type="similarity">
    <text evidence="1">Belongs to the shikimate dehydrogenase family.</text>
</comment>
<evidence type="ECO:0000255" key="1">
    <source>
        <dbReference type="HAMAP-Rule" id="MF_00222"/>
    </source>
</evidence>
<reference key="1">
    <citation type="journal article" date="2016" name="Genome Announc.">
        <title>Complete genome sequence of Alkaliphilus metalliredigens strain QYMF, an alkaliphilic and metal-reducing bacterium isolated from borax-contaminated leachate ponds.</title>
        <authorList>
            <person name="Hwang C."/>
            <person name="Copeland A."/>
            <person name="Lucas S."/>
            <person name="Lapidus A."/>
            <person name="Barry K."/>
            <person name="Detter J.C."/>
            <person name="Glavina Del Rio T."/>
            <person name="Hammon N."/>
            <person name="Israni S."/>
            <person name="Dalin E."/>
            <person name="Tice H."/>
            <person name="Pitluck S."/>
            <person name="Chertkov O."/>
            <person name="Brettin T."/>
            <person name="Bruce D."/>
            <person name="Han C."/>
            <person name="Schmutz J."/>
            <person name="Larimer F."/>
            <person name="Land M.L."/>
            <person name="Hauser L."/>
            <person name="Kyrpides N."/>
            <person name="Mikhailova N."/>
            <person name="Ye Q."/>
            <person name="Zhou J."/>
            <person name="Richardson P."/>
            <person name="Fields M.W."/>
        </authorList>
    </citation>
    <scope>NUCLEOTIDE SEQUENCE [LARGE SCALE GENOMIC DNA]</scope>
    <source>
        <strain>QYMF</strain>
    </source>
</reference>
<feature type="chain" id="PRO_1000058658" description="Shikimate dehydrogenase (NADP(+))">
    <location>
        <begin position="1"/>
        <end position="286"/>
    </location>
</feature>
<feature type="active site" description="Proton acceptor" evidence="1">
    <location>
        <position position="73"/>
    </location>
</feature>
<feature type="binding site" evidence="1">
    <location>
        <begin position="22"/>
        <end position="24"/>
    </location>
    <ligand>
        <name>shikimate</name>
        <dbReference type="ChEBI" id="CHEBI:36208"/>
    </ligand>
</feature>
<feature type="binding site" evidence="1">
    <location>
        <position position="69"/>
    </location>
    <ligand>
        <name>shikimate</name>
        <dbReference type="ChEBI" id="CHEBI:36208"/>
    </ligand>
</feature>
<feature type="binding site" evidence="1">
    <location>
        <position position="85"/>
    </location>
    <ligand>
        <name>NADP(+)</name>
        <dbReference type="ChEBI" id="CHEBI:58349"/>
    </ligand>
</feature>
<feature type="binding site" evidence="1">
    <location>
        <position position="94"/>
    </location>
    <ligand>
        <name>shikimate</name>
        <dbReference type="ChEBI" id="CHEBI:36208"/>
    </ligand>
</feature>
<feature type="binding site" evidence="1">
    <location>
        <position position="109"/>
    </location>
    <ligand>
        <name>shikimate</name>
        <dbReference type="ChEBI" id="CHEBI:36208"/>
    </ligand>
</feature>
<feature type="binding site" evidence="1">
    <location>
        <begin position="133"/>
        <end position="137"/>
    </location>
    <ligand>
        <name>NADP(+)</name>
        <dbReference type="ChEBI" id="CHEBI:58349"/>
    </ligand>
</feature>
<feature type="binding site" evidence="1">
    <location>
        <position position="231"/>
    </location>
    <ligand>
        <name>NADP(+)</name>
        <dbReference type="ChEBI" id="CHEBI:58349"/>
    </ligand>
</feature>
<feature type="binding site" evidence="1">
    <location>
        <position position="233"/>
    </location>
    <ligand>
        <name>shikimate</name>
        <dbReference type="ChEBI" id="CHEBI:36208"/>
    </ligand>
</feature>
<feature type="binding site" evidence="1">
    <location>
        <position position="254"/>
    </location>
    <ligand>
        <name>NADP(+)</name>
        <dbReference type="ChEBI" id="CHEBI:58349"/>
    </ligand>
</feature>
<protein>
    <recommendedName>
        <fullName evidence="1">Shikimate dehydrogenase (NADP(+))</fullName>
        <shortName evidence="1">SDH</shortName>
        <ecNumber evidence="1">1.1.1.25</ecNumber>
    </recommendedName>
</protein>
<accession>A6TM69</accession>
<name>AROE_ALKMQ</name>
<proteinExistence type="inferred from homology"/>
<organism>
    <name type="scientific">Alkaliphilus metalliredigens (strain QYMF)</name>
    <dbReference type="NCBI Taxonomy" id="293826"/>
    <lineage>
        <taxon>Bacteria</taxon>
        <taxon>Bacillati</taxon>
        <taxon>Bacillota</taxon>
        <taxon>Clostridia</taxon>
        <taxon>Peptostreptococcales</taxon>
        <taxon>Natronincolaceae</taxon>
        <taxon>Alkaliphilus</taxon>
    </lineage>
</organism>
<keyword id="KW-0028">Amino-acid biosynthesis</keyword>
<keyword id="KW-0057">Aromatic amino acid biosynthesis</keyword>
<keyword id="KW-0521">NADP</keyword>
<keyword id="KW-0560">Oxidoreductase</keyword>
<keyword id="KW-1185">Reference proteome</keyword>